<comment type="function">
    <text evidence="1">Accelerates the degradation of transcripts by removing pyrophosphate from the 5'-end of triphosphorylated RNA, leading to a more labile monophosphorylated state that can stimulate subsequent ribonuclease cleavage.</text>
</comment>
<comment type="cofactor">
    <cofactor evidence="1">
        <name>a divalent metal cation</name>
        <dbReference type="ChEBI" id="CHEBI:60240"/>
    </cofactor>
</comment>
<comment type="similarity">
    <text evidence="1">Belongs to the Nudix hydrolase family. RppH subfamily.</text>
</comment>
<evidence type="ECO:0000255" key="1">
    <source>
        <dbReference type="HAMAP-Rule" id="MF_00298"/>
    </source>
</evidence>
<dbReference type="EC" id="3.6.1.-" evidence="1"/>
<dbReference type="EMBL" id="CU234118">
    <property type="protein sequence ID" value="CAL74370.1"/>
    <property type="molecule type" value="Genomic_DNA"/>
</dbReference>
<dbReference type="RefSeq" id="WP_011923646.1">
    <property type="nucleotide sequence ID" value="NC_009445.1"/>
</dbReference>
<dbReference type="SMR" id="A4YKE4"/>
<dbReference type="STRING" id="114615.BRADO0423"/>
<dbReference type="KEGG" id="bra:BRADO0423"/>
<dbReference type="eggNOG" id="COG0494">
    <property type="taxonomic scope" value="Bacteria"/>
</dbReference>
<dbReference type="HOGENOM" id="CLU_087195_3_0_5"/>
<dbReference type="OrthoDB" id="9816040at2"/>
<dbReference type="Proteomes" id="UP000001994">
    <property type="component" value="Chromosome"/>
</dbReference>
<dbReference type="GO" id="GO:0034432">
    <property type="term" value="F:bis(5'-adenosyl)-pentaphosphatase activity"/>
    <property type="evidence" value="ECO:0007669"/>
    <property type="project" value="TreeGrafter"/>
</dbReference>
<dbReference type="GO" id="GO:0008893">
    <property type="term" value="F:guanosine-3',5'-bis(diphosphate) 3'-diphosphatase activity"/>
    <property type="evidence" value="ECO:0007669"/>
    <property type="project" value="TreeGrafter"/>
</dbReference>
<dbReference type="GO" id="GO:0006753">
    <property type="term" value="P:nucleoside phosphate metabolic process"/>
    <property type="evidence" value="ECO:0007669"/>
    <property type="project" value="TreeGrafter"/>
</dbReference>
<dbReference type="GO" id="GO:0019693">
    <property type="term" value="P:ribose phosphate metabolic process"/>
    <property type="evidence" value="ECO:0007669"/>
    <property type="project" value="TreeGrafter"/>
</dbReference>
<dbReference type="CDD" id="cd03671">
    <property type="entry name" value="NUDIX_Ap4A_hydrolase_plant_like"/>
    <property type="match status" value="1"/>
</dbReference>
<dbReference type="Gene3D" id="3.90.79.10">
    <property type="entry name" value="Nucleoside Triphosphate Pyrophosphohydrolase"/>
    <property type="match status" value="1"/>
</dbReference>
<dbReference type="HAMAP" id="MF_00298">
    <property type="entry name" value="Nudix_RppH"/>
    <property type="match status" value="1"/>
</dbReference>
<dbReference type="InterPro" id="IPR015797">
    <property type="entry name" value="NUDIX_hydrolase-like_dom_sf"/>
</dbReference>
<dbReference type="InterPro" id="IPR000086">
    <property type="entry name" value="NUDIX_hydrolase_dom"/>
</dbReference>
<dbReference type="InterPro" id="IPR022927">
    <property type="entry name" value="RppH"/>
</dbReference>
<dbReference type="NCBIfam" id="NF001938">
    <property type="entry name" value="PRK00714.1-5"/>
    <property type="match status" value="1"/>
</dbReference>
<dbReference type="PANTHER" id="PTHR11839:SF22">
    <property type="entry name" value="NUDIX HYDROLASE 26, CHLOROPLASTIC"/>
    <property type="match status" value="1"/>
</dbReference>
<dbReference type="PANTHER" id="PTHR11839">
    <property type="entry name" value="UDP/ADP-SUGAR PYROPHOSPHATASE"/>
    <property type="match status" value="1"/>
</dbReference>
<dbReference type="Pfam" id="PF00293">
    <property type="entry name" value="NUDIX"/>
    <property type="match status" value="1"/>
</dbReference>
<dbReference type="SUPFAM" id="SSF55811">
    <property type="entry name" value="Nudix"/>
    <property type="match status" value="1"/>
</dbReference>
<dbReference type="PROSITE" id="PS51462">
    <property type="entry name" value="NUDIX"/>
    <property type="match status" value="1"/>
</dbReference>
<keyword id="KW-0378">Hydrolase</keyword>
<keyword id="KW-1185">Reference proteome</keyword>
<name>RPPH_BRASO</name>
<sequence>MTRYEDLPYRTCVGIALINSEGLVFIGRRAGGIEHVDDTHVWQMPQGGVDPGEDAWEAAKRELYEETSVRSVEKLAEIDDWLTYDIPRTVAGRAWKGRYRGQRQKWFALRFTGKDSEIDVEHPGGGHHKAEFITWRWEPLQNLPTLIVPFKRPVYERVAKEFATLAGG</sequence>
<gene>
    <name evidence="1" type="primary">rppH</name>
    <name evidence="1" type="synonym">nudH</name>
    <name type="ordered locus">BRADO0423</name>
</gene>
<accession>A4YKE4</accession>
<organism>
    <name type="scientific">Bradyrhizobium sp. (strain ORS 278)</name>
    <dbReference type="NCBI Taxonomy" id="114615"/>
    <lineage>
        <taxon>Bacteria</taxon>
        <taxon>Pseudomonadati</taxon>
        <taxon>Pseudomonadota</taxon>
        <taxon>Alphaproteobacteria</taxon>
        <taxon>Hyphomicrobiales</taxon>
        <taxon>Nitrobacteraceae</taxon>
        <taxon>Bradyrhizobium</taxon>
    </lineage>
</organism>
<feature type="chain" id="PRO_1000021930" description="RNA pyrophosphohydrolase">
    <location>
        <begin position="1"/>
        <end position="168"/>
    </location>
</feature>
<feature type="domain" description="Nudix hydrolase" evidence="1">
    <location>
        <begin position="8"/>
        <end position="160"/>
    </location>
</feature>
<feature type="short sequence motif" description="Nudix box">
    <location>
        <begin position="47"/>
        <end position="68"/>
    </location>
</feature>
<proteinExistence type="inferred from homology"/>
<reference key="1">
    <citation type="journal article" date="2007" name="Science">
        <title>Legumes symbioses: absence of nod genes in photosynthetic bradyrhizobia.</title>
        <authorList>
            <person name="Giraud E."/>
            <person name="Moulin L."/>
            <person name="Vallenet D."/>
            <person name="Barbe V."/>
            <person name="Cytryn E."/>
            <person name="Avarre J.-C."/>
            <person name="Jaubert M."/>
            <person name="Simon D."/>
            <person name="Cartieaux F."/>
            <person name="Prin Y."/>
            <person name="Bena G."/>
            <person name="Hannibal L."/>
            <person name="Fardoux J."/>
            <person name="Kojadinovic M."/>
            <person name="Vuillet L."/>
            <person name="Lajus A."/>
            <person name="Cruveiller S."/>
            <person name="Rouy Z."/>
            <person name="Mangenot S."/>
            <person name="Segurens B."/>
            <person name="Dossat C."/>
            <person name="Franck W.L."/>
            <person name="Chang W.-S."/>
            <person name="Saunders E."/>
            <person name="Bruce D."/>
            <person name="Richardson P."/>
            <person name="Normand P."/>
            <person name="Dreyfus B."/>
            <person name="Pignol D."/>
            <person name="Stacey G."/>
            <person name="Emerich D."/>
            <person name="Vermeglio A."/>
            <person name="Medigue C."/>
            <person name="Sadowsky M."/>
        </authorList>
    </citation>
    <scope>NUCLEOTIDE SEQUENCE [LARGE SCALE GENOMIC DNA]</scope>
    <source>
        <strain>ORS 278</strain>
    </source>
</reference>
<protein>
    <recommendedName>
        <fullName evidence="1">RNA pyrophosphohydrolase</fullName>
        <ecNumber evidence="1">3.6.1.-</ecNumber>
    </recommendedName>
    <alternativeName>
        <fullName evidence="1">(Di)nucleoside polyphosphate hydrolase</fullName>
    </alternativeName>
</protein>